<organism>
    <name type="scientific">Salmonella newport (strain SL254)</name>
    <dbReference type="NCBI Taxonomy" id="423368"/>
    <lineage>
        <taxon>Bacteria</taxon>
        <taxon>Pseudomonadati</taxon>
        <taxon>Pseudomonadota</taxon>
        <taxon>Gammaproteobacteria</taxon>
        <taxon>Enterobacterales</taxon>
        <taxon>Enterobacteriaceae</taxon>
        <taxon>Salmonella</taxon>
    </lineage>
</organism>
<dbReference type="EC" id="2.8.1.8" evidence="1"/>
<dbReference type="EMBL" id="CP001113">
    <property type="protein sequence ID" value="ACF62738.1"/>
    <property type="molecule type" value="Genomic_DNA"/>
</dbReference>
<dbReference type="RefSeq" id="WP_000042640.1">
    <property type="nucleotide sequence ID" value="NZ_CCMR01000003.1"/>
</dbReference>
<dbReference type="SMR" id="B4SYJ0"/>
<dbReference type="KEGG" id="see:SNSL254_A0688"/>
<dbReference type="HOGENOM" id="CLU_033144_2_1_6"/>
<dbReference type="UniPathway" id="UPA00538">
    <property type="reaction ID" value="UER00593"/>
</dbReference>
<dbReference type="Proteomes" id="UP000008824">
    <property type="component" value="Chromosome"/>
</dbReference>
<dbReference type="GO" id="GO:0005737">
    <property type="term" value="C:cytoplasm"/>
    <property type="evidence" value="ECO:0007669"/>
    <property type="project" value="UniProtKB-SubCell"/>
</dbReference>
<dbReference type="GO" id="GO:0051539">
    <property type="term" value="F:4 iron, 4 sulfur cluster binding"/>
    <property type="evidence" value="ECO:0007669"/>
    <property type="project" value="UniProtKB-UniRule"/>
</dbReference>
<dbReference type="GO" id="GO:0016992">
    <property type="term" value="F:lipoate synthase activity"/>
    <property type="evidence" value="ECO:0007669"/>
    <property type="project" value="UniProtKB-UniRule"/>
</dbReference>
<dbReference type="GO" id="GO:0046872">
    <property type="term" value="F:metal ion binding"/>
    <property type="evidence" value="ECO:0007669"/>
    <property type="project" value="UniProtKB-KW"/>
</dbReference>
<dbReference type="CDD" id="cd01335">
    <property type="entry name" value="Radical_SAM"/>
    <property type="match status" value="1"/>
</dbReference>
<dbReference type="FunFam" id="3.20.20.70:FF:000023">
    <property type="entry name" value="Lipoyl synthase"/>
    <property type="match status" value="1"/>
</dbReference>
<dbReference type="Gene3D" id="3.20.20.70">
    <property type="entry name" value="Aldolase class I"/>
    <property type="match status" value="1"/>
</dbReference>
<dbReference type="HAMAP" id="MF_00206">
    <property type="entry name" value="Lipoyl_synth"/>
    <property type="match status" value="1"/>
</dbReference>
<dbReference type="InterPro" id="IPR013785">
    <property type="entry name" value="Aldolase_TIM"/>
</dbReference>
<dbReference type="InterPro" id="IPR006638">
    <property type="entry name" value="Elp3/MiaA/NifB-like_rSAM"/>
</dbReference>
<dbReference type="InterPro" id="IPR031691">
    <property type="entry name" value="LIAS_N"/>
</dbReference>
<dbReference type="InterPro" id="IPR003698">
    <property type="entry name" value="Lipoyl_synth"/>
</dbReference>
<dbReference type="InterPro" id="IPR007197">
    <property type="entry name" value="rSAM"/>
</dbReference>
<dbReference type="NCBIfam" id="TIGR00510">
    <property type="entry name" value="lipA"/>
    <property type="match status" value="1"/>
</dbReference>
<dbReference type="NCBIfam" id="NF004019">
    <property type="entry name" value="PRK05481.1"/>
    <property type="match status" value="1"/>
</dbReference>
<dbReference type="NCBIfam" id="NF009544">
    <property type="entry name" value="PRK12928.1"/>
    <property type="match status" value="1"/>
</dbReference>
<dbReference type="PANTHER" id="PTHR10949">
    <property type="entry name" value="LIPOYL SYNTHASE"/>
    <property type="match status" value="1"/>
</dbReference>
<dbReference type="PANTHER" id="PTHR10949:SF0">
    <property type="entry name" value="LIPOYL SYNTHASE, MITOCHONDRIAL"/>
    <property type="match status" value="1"/>
</dbReference>
<dbReference type="Pfam" id="PF16881">
    <property type="entry name" value="LIAS_N"/>
    <property type="match status" value="1"/>
</dbReference>
<dbReference type="Pfam" id="PF04055">
    <property type="entry name" value="Radical_SAM"/>
    <property type="match status" value="1"/>
</dbReference>
<dbReference type="PIRSF" id="PIRSF005963">
    <property type="entry name" value="Lipoyl_synth"/>
    <property type="match status" value="1"/>
</dbReference>
<dbReference type="SFLD" id="SFLDF00271">
    <property type="entry name" value="lipoyl_synthase"/>
    <property type="match status" value="1"/>
</dbReference>
<dbReference type="SFLD" id="SFLDS00029">
    <property type="entry name" value="Radical_SAM"/>
    <property type="match status" value="1"/>
</dbReference>
<dbReference type="SMART" id="SM00729">
    <property type="entry name" value="Elp3"/>
    <property type="match status" value="1"/>
</dbReference>
<dbReference type="SUPFAM" id="SSF102114">
    <property type="entry name" value="Radical SAM enzymes"/>
    <property type="match status" value="1"/>
</dbReference>
<dbReference type="PROSITE" id="PS51918">
    <property type="entry name" value="RADICAL_SAM"/>
    <property type="match status" value="1"/>
</dbReference>
<sequence length="321" mass="36042">MSKPIVMERGVKYRDADKMALIPVKNVVTERDALLRKPEWMKIKLPADSTRIQGIKAAMRKNGLHSVCEEASCPNLAECFNHGTATFMILGAICTRRCPFCDVAHGRPVAPDAEEPQKLAQTIADMALRYVVITSVDRDDLRDGGAQHFADCITAIRAKSPEIKIETLVPDFRGRMDRALDILNATPPDVFNHNLENVPRIYRQVRPGADYNWSLKLLERFKEAHPEIPTKSGLMVGLGETNAEIIEVMRDLRRHGVTMLTLGQYLQPSRHHLPVQRYVSPEEFDEMKAEALAMGFTHAACGPFVRSSYHADLQAKGMEVK</sequence>
<evidence type="ECO:0000255" key="1">
    <source>
        <dbReference type="HAMAP-Rule" id="MF_00206"/>
    </source>
</evidence>
<evidence type="ECO:0000255" key="2">
    <source>
        <dbReference type="PROSITE-ProRule" id="PRU01266"/>
    </source>
</evidence>
<accession>B4SYJ0</accession>
<proteinExistence type="inferred from homology"/>
<name>LIPA_SALNS</name>
<feature type="chain" id="PRO_1000099632" description="Lipoyl synthase">
    <location>
        <begin position="1"/>
        <end position="321"/>
    </location>
</feature>
<feature type="domain" description="Radical SAM core" evidence="2">
    <location>
        <begin position="80"/>
        <end position="297"/>
    </location>
</feature>
<feature type="binding site" evidence="1">
    <location>
        <position position="68"/>
    </location>
    <ligand>
        <name>[4Fe-4S] cluster</name>
        <dbReference type="ChEBI" id="CHEBI:49883"/>
        <label>1</label>
    </ligand>
</feature>
<feature type="binding site" evidence="1">
    <location>
        <position position="73"/>
    </location>
    <ligand>
        <name>[4Fe-4S] cluster</name>
        <dbReference type="ChEBI" id="CHEBI:49883"/>
        <label>1</label>
    </ligand>
</feature>
<feature type="binding site" evidence="1">
    <location>
        <position position="79"/>
    </location>
    <ligand>
        <name>[4Fe-4S] cluster</name>
        <dbReference type="ChEBI" id="CHEBI:49883"/>
        <label>1</label>
    </ligand>
</feature>
<feature type="binding site" evidence="1">
    <location>
        <position position="94"/>
    </location>
    <ligand>
        <name>[4Fe-4S] cluster</name>
        <dbReference type="ChEBI" id="CHEBI:49883"/>
        <label>2</label>
        <note>4Fe-4S-S-AdoMet</note>
    </ligand>
</feature>
<feature type="binding site" evidence="1">
    <location>
        <position position="98"/>
    </location>
    <ligand>
        <name>[4Fe-4S] cluster</name>
        <dbReference type="ChEBI" id="CHEBI:49883"/>
        <label>2</label>
        <note>4Fe-4S-S-AdoMet</note>
    </ligand>
</feature>
<feature type="binding site" evidence="1">
    <location>
        <position position="101"/>
    </location>
    <ligand>
        <name>[4Fe-4S] cluster</name>
        <dbReference type="ChEBI" id="CHEBI:49883"/>
        <label>2</label>
        <note>4Fe-4S-S-AdoMet</note>
    </ligand>
</feature>
<feature type="binding site" evidence="1">
    <location>
        <position position="308"/>
    </location>
    <ligand>
        <name>[4Fe-4S] cluster</name>
        <dbReference type="ChEBI" id="CHEBI:49883"/>
        <label>1</label>
    </ligand>
</feature>
<comment type="function">
    <text evidence="1">Catalyzes the radical-mediated insertion of two sulfur atoms into the C-6 and C-8 positions of the octanoyl moiety bound to the lipoyl domains of lipoate-dependent enzymes, thereby converting the octanoylated domains into lipoylated derivatives.</text>
</comment>
<comment type="catalytic activity">
    <reaction evidence="1">
        <text>[[Fe-S] cluster scaffold protein carrying a second [4Fe-4S](2+) cluster] + N(6)-octanoyl-L-lysyl-[protein] + 2 oxidized [2Fe-2S]-[ferredoxin] + 2 S-adenosyl-L-methionine + 4 H(+) = [[Fe-S] cluster scaffold protein] + N(6)-[(R)-dihydrolipoyl]-L-lysyl-[protein] + 4 Fe(3+) + 2 hydrogen sulfide + 2 5'-deoxyadenosine + 2 L-methionine + 2 reduced [2Fe-2S]-[ferredoxin]</text>
        <dbReference type="Rhea" id="RHEA:16585"/>
        <dbReference type="Rhea" id="RHEA-COMP:9928"/>
        <dbReference type="Rhea" id="RHEA-COMP:10000"/>
        <dbReference type="Rhea" id="RHEA-COMP:10001"/>
        <dbReference type="Rhea" id="RHEA-COMP:10475"/>
        <dbReference type="Rhea" id="RHEA-COMP:14568"/>
        <dbReference type="Rhea" id="RHEA-COMP:14569"/>
        <dbReference type="ChEBI" id="CHEBI:15378"/>
        <dbReference type="ChEBI" id="CHEBI:17319"/>
        <dbReference type="ChEBI" id="CHEBI:29034"/>
        <dbReference type="ChEBI" id="CHEBI:29919"/>
        <dbReference type="ChEBI" id="CHEBI:33722"/>
        <dbReference type="ChEBI" id="CHEBI:33737"/>
        <dbReference type="ChEBI" id="CHEBI:33738"/>
        <dbReference type="ChEBI" id="CHEBI:57844"/>
        <dbReference type="ChEBI" id="CHEBI:59789"/>
        <dbReference type="ChEBI" id="CHEBI:78809"/>
        <dbReference type="ChEBI" id="CHEBI:83100"/>
        <dbReference type="EC" id="2.8.1.8"/>
    </reaction>
</comment>
<comment type="cofactor">
    <cofactor evidence="1">
        <name>[4Fe-4S] cluster</name>
        <dbReference type="ChEBI" id="CHEBI:49883"/>
    </cofactor>
    <text evidence="1">Binds 2 [4Fe-4S] clusters per subunit. One cluster is coordinated with 3 cysteines and an exchangeable S-adenosyl-L-methionine.</text>
</comment>
<comment type="pathway">
    <text evidence="1">Protein modification; protein lipoylation via endogenous pathway; protein N(6)-(lipoyl)lysine from octanoyl-[acyl-carrier-protein]: step 2/2.</text>
</comment>
<comment type="subcellular location">
    <subcellularLocation>
        <location evidence="1">Cytoplasm</location>
    </subcellularLocation>
</comment>
<comment type="similarity">
    <text evidence="1">Belongs to the radical SAM superfamily. Lipoyl synthase family.</text>
</comment>
<keyword id="KW-0004">4Fe-4S</keyword>
<keyword id="KW-0963">Cytoplasm</keyword>
<keyword id="KW-0408">Iron</keyword>
<keyword id="KW-0411">Iron-sulfur</keyword>
<keyword id="KW-0479">Metal-binding</keyword>
<keyword id="KW-0949">S-adenosyl-L-methionine</keyword>
<keyword id="KW-0808">Transferase</keyword>
<gene>
    <name evidence="1" type="primary">lipA</name>
    <name type="ordered locus">SNSL254_A0688</name>
</gene>
<protein>
    <recommendedName>
        <fullName evidence="1">Lipoyl synthase</fullName>
        <ecNumber evidence="1">2.8.1.8</ecNumber>
    </recommendedName>
    <alternativeName>
        <fullName evidence="1">Lip-syn</fullName>
        <shortName evidence="1">LS</shortName>
    </alternativeName>
    <alternativeName>
        <fullName evidence="1">Lipoate synthase</fullName>
    </alternativeName>
    <alternativeName>
        <fullName evidence="1">Lipoic acid synthase</fullName>
    </alternativeName>
    <alternativeName>
        <fullName evidence="1">Sulfur insertion protein LipA</fullName>
    </alternativeName>
</protein>
<reference key="1">
    <citation type="journal article" date="2011" name="J. Bacteriol.">
        <title>Comparative genomics of 28 Salmonella enterica isolates: evidence for CRISPR-mediated adaptive sublineage evolution.</title>
        <authorList>
            <person name="Fricke W.F."/>
            <person name="Mammel M.K."/>
            <person name="McDermott P.F."/>
            <person name="Tartera C."/>
            <person name="White D.G."/>
            <person name="Leclerc J.E."/>
            <person name="Ravel J."/>
            <person name="Cebula T.A."/>
        </authorList>
    </citation>
    <scope>NUCLEOTIDE SEQUENCE [LARGE SCALE GENOMIC DNA]</scope>
    <source>
        <strain>SL254</strain>
    </source>
</reference>